<feature type="chain" id="PRO_1000118381" description="Peptidyl-tRNA hydrolase">
    <location>
        <begin position="1"/>
        <end position="205"/>
    </location>
</feature>
<feature type="active site" description="Proton acceptor" evidence="1">
    <location>
        <position position="19"/>
    </location>
</feature>
<feature type="binding site" evidence="1">
    <location>
        <position position="14"/>
    </location>
    <ligand>
        <name>tRNA</name>
        <dbReference type="ChEBI" id="CHEBI:17843"/>
    </ligand>
</feature>
<feature type="binding site" evidence="1">
    <location>
        <position position="68"/>
    </location>
    <ligand>
        <name>tRNA</name>
        <dbReference type="ChEBI" id="CHEBI:17843"/>
    </ligand>
</feature>
<feature type="binding site" evidence="1">
    <location>
        <position position="70"/>
    </location>
    <ligand>
        <name>tRNA</name>
        <dbReference type="ChEBI" id="CHEBI:17843"/>
    </ligand>
</feature>
<feature type="binding site" evidence="1">
    <location>
        <position position="116"/>
    </location>
    <ligand>
        <name>tRNA</name>
        <dbReference type="ChEBI" id="CHEBI:17843"/>
    </ligand>
</feature>
<feature type="site" description="Discriminates between blocked and unblocked aminoacyl-tRNA" evidence="1">
    <location>
        <position position="9"/>
    </location>
</feature>
<feature type="site" description="Stabilizes the basic form of H active site to accept a proton" evidence="1">
    <location>
        <position position="95"/>
    </location>
</feature>
<protein>
    <recommendedName>
        <fullName evidence="1">Peptidyl-tRNA hydrolase</fullName>
        <shortName evidence="1">Pth</shortName>
        <ecNumber evidence="1">3.1.1.29</ecNumber>
    </recommendedName>
</protein>
<sequence length="205" mass="22472">MLILAGLGNPEPKYEKNRHNVGFMAVDALARKWGTAPWRARFQGLACEGQVSTPDGPVKLLLLKPKTYYNESGRAVGEAMKFFKLQPTDVIVFHDEIDMAPGRFRMKSGGGAAGNNGIRSVTSQVGDAFRRGRIGVGHPGHKDAVMHYVLGDFHKVEHQWLDPILDAIADALPFAAVGDDERYQAEVMRLAPAPKADPRKPAKDD</sequence>
<proteinExistence type="inferred from homology"/>
<keyword id="KW-0963">Cytoplasm</keyword>
<keyword id="KW-0378">Hydrolase</keyword>
<keyword id="KW-1185">Reference proteome</keyword>
<keyword id="KW-0694">RNA-binding</keyword>
<keyword id="KW-0820">tRNA-binding</keyword>
<name>PTH_CAUVN</name>
<organism>
    <name type="scientific">Caulobacter vibrioides (strain NA1000 / CB15N)</name>
    <name type="common">Caulobacter crescentus</name>
    <dbReference type="NCBI Taxonomy" id="565050"/>
    <lineage>
        <taxon>Bacteria</taxon>
        <taxon>Pseudomonadati</taxon>
        <taxon>Pseudomonadota</taxon>
        <taxon>Alphaproteobacteria</taxon>
        <taxon>Caulobacterales</taxon>
        <taxon>Caulobacteraceae</taxon>
        <taxon>Caulobacter</taxon>
    </lineage>
</organism>
<gene>
    <name evidence="1" type="primary">pth</name>
    <name type="ordered locus">CCNA_00517</name>
</gene>
<comment type="function">
    <text evidence="1">Hydrolyzes ribosome-free peptidyl-tRNAs (with 1 or more amino acids incorporated), which drop off the ribosome during protein synthesis, or as a result of ribosome stalling.</text>
</comment>
<comment type="function">
    <text evidence="1">Catalyzes the release of premature peptidyl moieties from peptidyl-tRNA molecules trapped in stalled 50S ribosomal subunits, and thus maintains levels of free tRNAs and 50S ribosomes.</text>
</comment>
<comment type="catalytic activity">
    <reaction evidence="1">
        <text>an N-acyl-L-alpha-aminoacyl-tRNA + H2O = an N-acyl-L-amino acid + a tRNA + H(+)</text>
        <dbReference type="Rhea" id="RHEA:54448"/>
        <dbReference type="Rhea" id="RHEA-COMP:10123"/>
        <dbReference type="Rhea" id="RHEA-COMP:13883"/>
        <dbReference type="ChEBI" id="CHEBI:15377"/>
        <dbReference type="ChEBI" id="CHEBI:15378"/>
        <dbReference type="ChEBI" id="CHEBI:59874"/>
        <dbReference type="ChEBI" id="CHEBI:78442"/>
        <dbReference type="ChEBI" id="CHEBI:138191"/>
        <dbReference type="EC" id="3.1.1.29"/>
    </reaction>
</comment>
<comment type="subunit">
    <text evidence="1">Monomer.</text>
</comment>
<comment type="subcellular location">
    <subcellularLocation>
        <location evidence="1">Cytoplasm</location>
    </subcellularLocation>
</comment>
<comment type="similarity">
    <text evidence="1">Belongs to the PTH family.</text>
</comment>
<accession>B8GZU8</accession>
<reference key="1">
    <citation type="journal article" date="2010" name="J. Bacteriol.">
        <title>The genetic basis of laboratory adaptation in Caulobacter crescentus.</title>
        <authorList>
            <person name="Marks M.E."/>
            <person name="Castro-Rojas C.M."/>
            <person name="Teiling C."/>
            <person name="Du L."/>
            <person name="Kapatral V."/>
            <person name="Walunas T.L."/>
            <person name="Crosson S."/>
        </authorList>
    </citation>
    <scope>NUCLEOTIDE SEQUENCE [LARGE SCALE GENOMIC DNA]</scope>
    <source>
        <strain>NA1000 / CB15N</strain>
    </source>
</reference>
<evidence type="ECO:0000255" key="1">
    <source>
        <dbReference type="HAMAP-Rule" id="MF_00083"/>
    </source>
</evidence>
<dbReference type="EC" id="3.1.1.29" evidence="1"/>
<dbReference type="EMBL" id="CP001340">
    <property type="protein sequence ID" value="ACL93982.1"/>
    <property type="molecule type" value="Genomic_DNA"/>
</dbReference>
<dbReference type="RefSeq" id="WP_010918372.1">
    <property type="nucleotide sequence ID" value="NC_011916.1"/>
</dbReference>
<dbReference type="RefSeq" id="YP_002515890.1">
    <property type="nucleotide sequence ID" value="NC_011916.1"/>
</dbReference>
<dbReference type="SMR" id="B8GZU8"/>
<dbReference type="GeneID" id="7332207"/>
<dbReference type="KEGG" id="ccs:CCNA_00517"/>
<dbReference type="PATRIC" id="fig|565050.3.peg.508"/>
<dbReference type="HOGENOM" id="CLU_062456_1_0_5"/>
<dbReference type="OrthoDB" id="9800507at2"/>
<dbReference type="PhylomeDB" id="B8GZU8"/>
<dbReference type="Proteomes" id="UP000001364">
    <property type="component" value="Chromosome"/>
</dbReference>
<dbReference type="GO" id="GO:0005737">
    <property type="term" value="C:cytoplasm"/>
    <property type="evidence" value="ECO:0007669"/>
    <property type="project" value="UniProtKB-SubCell"/>
</dbReference>
<dbReference type="GO" id="GO:0004045">
    <property type="term" value="F:peptidyl-tRNA hydrolase activity"/>
    <property type="evidence" value="ECO:0007669"/>
    <property type="project" value="UniProtKB-UniRule"/>
</dbReference>
<dbReference type="GO" id="GO:0000049">
    <property type="term" value="F:tRNA binding"/>
    <property type="evidence" value="ECO:0007669"/>
    <property type="project" value="UniProtKB-UniRule"/>
</dbReference>
<dbReference type="GO" id="GO:0006515">
    <property type="term" value="P:protein quality control for misfolded or incompletely synthesized proteins"/>
    <property type="evidence" value="ECO:0007669"/>
    <property type="project" value="UniProtKB-UniRule"/>
</dbReference>
<dbReference type="GO" id="GO:0072344">
    <property type="term" value="P:rescue of stalled ribosome"/>
    <property type="evidence" value="ECO:0007669"/>
    <property type="project" value="UniProtKB-UniRule"/>
</dbReference>
<dbReference type="CDD" id="cd00462">
    <property type="entry name" value="PTH"/>
    <property type="match status" value="1"/>
</dbReference>
<dbReference type="Gene3D" id="3.40.50.1470">
    <property type="entry name" value="Peptidyl-tRNA hydrolase"/>
    <property type="match status" value="1"/>
</dbReference>
<dbReference type="HAMAP" id="MF_00083">
    <property type="entry name" value="Pept_tRNA_hydro_bact"/>
    <property type="match status" value="1"/>
</dbReference>
<dbReference type="InterPro" id="IPR001328">
    <property type="entry name" value="Pept_tRNA_hydro"/>
</dbReference>
<dbReference type="InterPro" id="IPR018171">
    <property type="entry name" value="Pept_tRNA_hydro_CS"/>
</dbReference>
<dbReference type="InterPro" id="IPR036416">
    <property type="entry name" value="Pept_tRNA_hydro_sf"/>
</dbReference>
<dbReference type="NCBIfam" id="TIGR00447">
    <property type="entry name" value="pth"/>
    <property type="match status" value="1"/>
</dbReference>
<dbReference type="PANTHER" id="PTHR17224">
    <property type="entry name" value="PEPTIDYL-TRNA HYDROLASE"/>
    <property type="match status" value="1"/>
</dbReference>
<dbReference type="PANTHER" id="PTHR17224:SF1">
    <property type="entry name" value="PEPTIDYL-TRNA HYDROLASE"/>
    <property type="match status" value="1"/>
</dbReference>
<dbReference type="Pfam" id="PF01195">
    <property type="entry name" value="Pept_tRNA_hydro"/>
    <property type="match status" value="1"/>
</dbReference>
<dbReference type="SUPFAM" id="SSF53178">
    <property type="entry name" value="Peptidyl-tRNA hydrolase-like"/>
    <property type="match status" value="1"/>
</dbReference>
<dbReference type="PROSITE" id="PS01195">
    <property type="entry name" value="PEPT_TRNA_HYDROL_1"/>
    <property type="match status" value="1"/>
</dbReference>